<accession>B6HFX9</accession>
<proteinExistence type="inferred from homology"/>
<evidence type="ECO:0000250" key="1">
    <source>
        <dbReference type="UniProtKB" id="P04798"/>
    </source>
</evidence>
<evidence type="ECO:0000250" key="2">
    <source>
        <dbReference type="UniProtKB" id="W6Q9B3"/>
    </source>
</evidence>
<evidence type="ECO:0000255" key="3"/>
<evidence type="ECO:0000269" key="4">
    <source>
    </source>
</evidence>
<evidence type="ECO:0000303" key="5">
    <source>
    </source>
</evidence>
<evidence type="ECO:0000305" key="6"/>
<evidence type="ECO:0000305" key="7">
    <source>
    </source>
</evidence>
<feature type="chain" id="PRO_0000453713" description="Conidiogenone synthase PchP450">
    <location>
        <begin position="1"/>
        <end position="491"/>
    </location>
</feature>
<feature type="transmembrane region" description="Helical" evidence="3">
    <location>
        <begin position="2"/>
        <end position="22"/>
    </location>
</feature>
<feature type="binding site" description="axial binding residue" evidence="1">
    <location>
        <position position="430"/>
    </location>
    <ligand>
        <name>heme</name>
        <dbReference type="ChEBI" id="CHEBI:30413"/>
    </ligand>
    <ligandPart>
        <name>Fe</name>
        <dbReference type="ChEBI" id="CHEBI:18248"/>
    </ligandPart>
</feature>
<reference key="1">
    <citation type="journal article" date="2008" name="Nat. Biotechnol.">
        <title>Genome sequencing and analysis of the filamentous fungus Penicillium chrysogenum.</title>
        <authorList>
            <person name="van den Berg M.A."/>
            <person name="Albang R."/>
            <person name="Albermann K."/>
            <person name="Badger J.H."/>
            <person name="Daran J.-M."/>
            <person name="Driessen A.J.M."/>
            <person name="Garcia-Estrada C."/>
            <person name="Fedorova N.D."/>
            <person name="Harris D.M."/>
            <person name="Heijne W.H.M."/>
            <person name="Joardar V.S."/>
            <person name="Kiel J.A.K.W."/>
            <person name="Kovalchuk A."/>
            <person name="Martin J.F."/>
            <person name="Nierman W.C."/>
            <person name="Nijland J.G."/>
            <person name="Pronk J.T."/>
            <person name="Roubos J.A."/>
            <person name="van der Klei I.J."/>
            <person name="van Peij N.N.M.E."/>
            <person name="Veenhuis M."/>
            <person name="von Doehren H."/>
            <person name="Wagner C."/>
            <person name="Wortman J.R."/>
            <person name="Bovenberg R.A.L."/>
        </authorList>
    </citation>
    <scope>NUCLEOTIDE SEQUENCE [LARGE SCALE GENOMIC DNA]</scope>
    <source>
        <strain>ATCC 28089 / DSM 1075 / NRRL 1951 / Wisconsin 54-1255</strain>
    </source>
</reference>
<reference key="2">
    <citation type="journal article" date="2019" name="Biosci. Biotechnol. Biochem.">
        <title>Biosynthetic study of conidiation-inducing factor conidiogenone: heterologous production and cyclization mechanism of a key bifunctional diterpene synthase.</title>
        <authorList>
            <person name="Shiina T."/>
            <person name="Nakagawa K."/>
            <person name="Fujisaki Y."/>
            <person name="Ozaki T."/>
            <person name="Liu C."/>
            <person name="Toyomasu T."/>
            <person name="Hashimoto M."/>
            <person name="Koshino H."/>
            <person name="Minami A."/>
            <person name="Kawaide H."/>
            <person name="Oikawa H."/>
        </authorList>
    </citation>
    <scope>FUNCTION</scope>
</reference>
<sequence length="491" mass="55322">MLLLWFGFFSFVCGLVIYRLQFHPLSKFPGPKLAALTSLYEFYYNVVLGGRYLWEIERMHEQYGPIVRITPHELHVADPNFYTEIYAGPTRRRDKDPRLVRLAGQPTSMFATVDHGLHSSRRAILNNYFSKRSIAGLEDMIQGKVQKLVKRLNIACDQGTVVQLDAASSALTADIISEYAHGVSLDYLDDVNFNNEVADSILSLASVVHVLKFFPFLLDLSKFIPDKVLENLWSHAANILRLQKLVRAQADVALQNGGKVNGQATMFGALCDPSLPAQERTLDRLQDEGFSLIGGGTETTTGTLKVIMFHLLNEKALLRKLRKELEESPSGTWAELEKLPYMRGVMNEGLRLSGVITRLPRRAPDEALRYKQWTIPPNSLMSTSSHFVHTNSDLFPDPLVFDPERWIRAEAAGQRLEHMIVTFSKGSRQCMGNHLALAELYLVISTLVREFDMDLYGVTADNIVTHREYGFGVPKERGGGLRVSISRVRTP</sequence>
<comment type="function">
    <text evidence="2 4">Cytochrome P450 monooxygenase; part of the gene cluster that mediates the biosynthesis of conidiogenone, a diterpene known to induce the conidiation (PubMed:30343633). The bifunctional terpene synthase PrDS converts isopentenyl diphosphate (IPP) and dimethylallyl diphosphate (DMAPP) into deoxyconidiogenol (PubMed:30343633). The C-terminal prenyltransferase (PT) domain of PrDS catalyzes formation of GGPP, whereas the N-terminal terpene cyclase (TC) domain catalyzes the cyclization of GGPP into deoxyconidiogenol (PubMed:30343633). The cytochrome P450 monooxygenase PrP450 then catalyzes two rounds of oxidation to furnish conidiogenone (By similarity).</text>
</comment>
<comment type="cofactor">
    <cofactor evidence="1">
        <name>heme</name>
        <dbReference type="ChEBI" id="CHEBI:30413"/>
    </cofactor>
</comment>
<comment type="pathway">
    <text evidence="2">Secondary metabolite biosynthesis; terpenoid biosynthesis.</text>
</comment>
<comment type="subcellular location">
    <subcellularLocation>
        <location evidence="3">Membrane</location>
        <topology evidence="3">Single-pass membrane protein</topology>
    </subcellularLocation>
</comment>
<comment type="similarity">
    <text evidence="6">Belongs to the cytochrome P450 family.</text>
</comment>
<protein>
    <recommendedName>
        <fullName evidence="5">Conidiogenone synthase PchP450</fullName>
        <ecNumber evidence="7">1.-.-.-</ecNumber>
    </recommendedName>
    <alternativeName>
        <fullName evidence="5">Conidiogenone biosynthesis cluster protein PchP450</fullName>
    </alternativeName>
    <alternativeName>
        <fullName evidence="5">Cytochrome P450 monooxygenase PchP450</fullName>
    </alternativeName>
</protein>
<organism>
    <name type="scientific">Penicillium rubens (strain ATCC 28089 / DSM 1075 / NRRL 1951 / Wisconsin 54-1255)</name>
    <name type="common">Penicillium chrysogenum</name>
    <dbReference type="NCBI Taxonomy" id="500485"/>
    <lineage>
        <taxon>Eukaryota</taxon>
        <taxon>Fungi</taxon>
        <taxon>Dikarya</taxon>
        <taxon>Ascomycota</taxon>
        <taxon>Pezizomycotina</taxon>
        <taxon>Eurotiomycetes</taxon>
        <taxon>Eurotiomycetidae</taxon>
        <taxon>Eurotiales</taxon>
        <taxon>Aspergillaceae</taxon>
        <taxon>Penicillium</taxon>
        <taxon>Penicillium chrysogenum species complex</taxon>
    </lineage>
</organism>
<name>PC450_PENRW</name>
<dbReference type="EC" id="1.-.-.-" evidence="7"/>
<dbReference type="EMBL" id="AM920435">
    <property type="protein sequence ID" value="CAP86416.1"/>
    <property type="molecule type" value="Genomic_DNA"/>
</dbReference>
<dbReference type="RefSeq" id="XP_002563576.1">
    <property type="nucleotide sequence ID" value="XM_002563530.1"/>
</dbReference>
<dbReference type="SMR" id="B6HFX9"/>
<dbReference type="STRING" id="500485.B6HFX9"/>
<dbReference type="VEuPathDB" id="FungiDB:PCH_Pc20g10870"/>
<dbReference type="eggNOG" id="KOG0156">
    <property type="taxonomic scope" value="Eukaryota"/>
</dbReference>
<dbReference type="HOGENOM" id="CLU_001570_14_4_1"/>
<dbReference type="OMA" id="NIVTHRE"/>
<dbReference type="OrthoDB" id="3945418at2759"/>
<dbReference type="BioCyc" id="PCHR:PC20G10870-MONOMER"/>
<dbReference type="UniPathway" id="UPA00213"/>
<dbReference type="Proteomes" id="UP000000724">
    <property type="component" value="Contig Pc00c20"/>
</dbReference>
<dbReference type="GO" id="GO:0016020">
    <property type="term" value="C:membrane"/>
    <property type="evidence" value="ECO:0007669"/>
    <property type="project" value="UniProtKB-SubCell"/>
</dbReference>
<dbReference type="GO" id="GO:0020037">
    <property type="term" value="F:heme binding"/>
    <property type="evidence" value="ECO:0007669"/>
    <property type="project" value="InterPro"/>
</dbReference>
<dbReference type="GO" id="GO:0005506">
    <property type="term" value="F:iron ion binding"/>
    <property type="evidence" value="ECO:0007669"/>
    <property type="project" value="InterPro"/>
</dbReference>
<dbReference type="GO" id="GO:0004497">
    <property type="term" value="F:monooxygenase activity"/>
    <property type="evidence" value="ECO:0000250"/>
    <property type="project" value="GO_Central"/>
</dbReference>
<dbReference type="GO" id="GO:0016705">
    <property type="term" value="F:oxidoreductase activity, acting on paired donors, with incorporation or reduction of molecular oxygen"/>
    <property type="evidence" value="ECO:0007669"/>
    <property type="project" value="InterPro"/>
</dbReference>
<dbReference type="GO" id="GO:0140879">
    <property type="term" value="P:conidiogenone biosynthetic process"/>
    <property type="evidence" value="ECO:0000250"/>
    <property type="project" value="GO_Central"/>
</dbReference>
<dbReference type="CDD" id="cd11062">
    <property type="entry name" value="CYP58-like"/>
    <property type="match status" value="1"/>
</dbReference>
<dbReference type="Gene3D" id="1.10.630.10">
    <property type="entry name" value="Cytochrome P450"/>
    <property type="match status" value="1"/>
</dbReference>
<dbReference type="InterPro" id="IPR001128">
    <property type="entry name" value="Cyt_P450"/>
</dbReference>
<dbReference type="InterPro" id="IPR017972">
    <property type="entry name" value="Cyt_P450_CS"/>
</dbReference>
<dbReference type="InterPro" id="IPR002401">
    <property type="entry name" value="Cyt_P450_E_grp-I"/>
</dbReference>
<dbReference type="InterPro" id="IPR036396">
    <property type="entry name" value="Cyt_P450_sf"/>
</dbReference>
<dbReference type="InterPro" id="IPR050121">
    <property type="entry name" value="Cytochrome_P450_monoxygenase"/>
</dbReference>
<dbReference type="PANTHER" id="PTHR24305">
    <property type="entry name" value="CYTOCHROME P450"/>
    <property type="match status" value="1"/>
</dbReference>
<dbReference type="PANTHER" id="PTHR24305:SF157">
    <property type="entry name" value="N-ACETYLTRYPTOPHAN 6-HYDROXYLASE IVOC-RELATED"/>
    <property type="match status" value="1"/>
</dbReference>
<dbReference type="Pfam" id="PF00067">
    <property type="entry name" value="p450"/>
    <property type="match status" value="1"/>
</dbReference>
<dbReference type="PRINTS" id="PR00463">
    <property type="entry name" value="EP450I"/>
</dbReference>
<dbReference type="PRINTS" id="PR00385">
    <property type="entry name" value="P450"/>
</dbReference>
<dbReference type="SUPFAM" id="SSF48264">
    <property type="entry name" value="Cytochrome P450"/>
    <property type="match status" value="1"/>
</dbReference>
<dbReference type="PROSITE" id="PS00086">
    <property type="entry name" value="CYTOCHROME_P450"/>
    <property type="match status" value="1"/>
</dbReference>
<gene>
    <name evidence="5" type="primary">PchP450</name>
    <name type="ORF">Pc20g10870</name>
    <name type="ORF">PCH_Pc20g10870</name>
</gene>
<keyword id="KW-0349">Heme</keyword>
<keyword id="KW-0408">Iron</keyword>
<keyword id="KW-0472">Membrane</keyword>
<keyword id="KW-0479">Metal-binding</keyword>
<keyword id="KW-0503">Monooxygenase</keyword>
<keyword id="KW-0560">Oxidoreductase</keyword>
<keyword id="KW-1185">Reference proteome</keyword>
<keyword id="KW-0812">Transmembrane</keyword>
<keyword id="KW-1133">Transmembrane helix</keyword>